<organism>
    <name type="scientific">Rhodomonas sp. (strain CS 24)</name>
    <name type="common">Chroomonas sp. (strain CS24)</name>
    <dbReference type="NCBI Taxonomy" id="79257"/>
    <lineage>
        <taxon>Eukaryota</taxon>
        <taxon>Cryptophyceae</taxon>
        <taxon>Pyrenomonadales</taxon>
        <taxon>Pyrenomonadaceae</taxon>
        <taxon>Rhodomonas</taxon>
    </lineage>
</organism>
<protein>
    <recommendedName>
        <fullName>Phycoerythrin alpha-1 chain</fullName>
    </recommendedName>
</protein>
<dbReference type="SMR" id="P30942"/>
<dbReference type="GO" id="GO:0009535">
    <property type="term" value="C:chloroplast thylakoid membrane"/>
    <property type="evidence" value="ECO:0007669"/>
    <property type="project" value="UniProtKB-SubCell"/>
</dbReference>
<dbReference type="GO" id="GO:0030089">
    <property type="term" value="C:phycobilisome"/>
    <property type="evidence" value="ECO:0007669"/>
    <property type="project" value="InterPro"/>
</dbReference>
<dbReference type="GO" id="GO:0015979">
    <property type="term" value="P:photosynthesis"/>
    <property type="evidence" value="ECO:0007669"/>
    <property type="project" value="UniProtKB-KW"/>
</dbReference>
<dbReference type="Gene3D" id="3.90.510.10">
    <property type="entry name" value="Phycoerythrin alpha chain"/>
    <property type="match status" value="1"/>
</dbReference>
<dbReference type="InterPro" id="IPR011070">
    <property type="entry name" value="Globular_prot_asu/bsu"/>
</dbReference>
<dbReference type="InterPro" id="IPR037011">
    <property type="entry name" value="Phycoerythr-like_a_sf"/>
</dbReference>
<dbReference type="InterPro" id="IPR004228">
    <property type="entry name" value="Phycoerythr_a"/>
</dbReference>
<dbReference type="Pfam" id="PF02972">
    <property type="entry name" value="Phycoerythr_ab"/>
    <property type="match status" value="1"/>
</dbReference>
<dbReference type="SUPFAM" id="SSF56568">
    <property type="entry name" value="Non-globular alpha+beta subunits of globular proteins"/>
    <property type="match status" value="1"/>
</dbReference>
<gene>
    <name type="primary">cpeA1</name>
</gene>
<name>PHE1_RHDS2</name>
<keyword id="KW-0089">Bile pigment</keyword>
<keyword id="KW-0150">Chloroplast</keyword>
<keyword id="KW-0157">Chromophore</keyword>
<keyword id="KW-0903">Direct protein sequencing</keyword>
<keyword id="KW-0249">Electron transport</keyword>
<keyword id="KW-0379">Hydroxylation</keyword>
<keyword id="KW-0472">Membrane</keyword>
<keyword id="KW-0602">Photosynthesis</keyword>
<keyword id="KW-0934">Plastid</keyword>
<keyword id="KW-0793">Thylakoid</keyword>
<keyword id="KW-0813">Transport</keyword>
<reference key="1">
    <citation type="journal article" date="1990" name="FEBS Lett.">
        <title>A genomic clone encoding a cryptophyte phycoerythrin alpha-subunit. Evidence for three alpha-subunits and an N-terminal membrane transit sequence.</title>
        <authorList>
            <person name="Jenkins J."/>
            <person name="Hiller R.G."/>
            <person name="Speirs J."/>
            <person name="Godovac-Zimmermann J."/>
        </authorList>
    </citation>
    <scope>PROTEIN SEQUENCE</scope>
</reference>
<sequence>AMDKSAKAPQITIFDHRGCSRAPKSETGGTATKDDQMMVKVSQV</sequence>
<evidence type="ECO:0000250" key="1"/>
<evidence type="ECO:0000256" key="2">
    <source>
        <dbReference type="SAM" id="MobiDB-lite"/>
    </source>
</evidence>
<evidence type="ECO:0000305" key="3"/>
<accession>P30942</accession>
<proteinExistence type="evidence at protein level"/>
<comment type="function">
    <text>Light-harvesting photosynthetic tetrapyrrole chromophore-protein from the phycobiliprotein complex.</text>
</comment>
<comment type="subunit">
    <text evidence="1">Heterotetramer of 2 different alpha chains and 2 identical beta chains. The subunit composition could comprise of any combination of 2 out of 4 different alpha units with an invariant beta unit (By similarity).</text>
</comment>
<comment type="subcellular location">
    <subcellularLocation>
        <location>Plastid</location>
        <location>Chloroplast thylakoid membrane</location>
        <topology>Peripheral membrane protein</topology>
        <orientation>Lumenal side</orientation>
    </subcellularLocation>
</comment>
<comment type="PTM">
    <text evidence="1">Contains one covalently linked 15,16-dihydrobiliverdin chromophore.</text>
</comment>
<comment type="miscellaneous">
    <text>The light-harvesting system in Cryptophytes contains phycobiliprotein complexes. Unusually they are composed of either phycoerythrin (CPE) or phycocyanin (CPC) but never allophycocyanin (APC), with only one type of biliprotein being present in any one species. Unlike cyanobacteria or red algae these proteins are not arranged into higher-order phycobilisome complexes, and they are found in the thylakoid lumen.</text>
</comment>
<comment type="similarity">
    <text evidence="3">Belongs to the phycoerythrin family.</text>
</comment>
<feature type="chain" id="PRO_0000199209" description="Phycoerythrin alpha-1 chain">
    <location>
        <begin position="1"/>
        <end position="44" status="greater than"/>
    </location>
</feature>
<feature type="region of interest" description="Disordered" evidence="2">
    <location>
        <begin position="1"/>
        <end position="44"/>
    </location>
</feature>
<feature type="region of interest" description="15,16-dihydrobiliverdin chromophore" evidence="1">
    <location>
        <begin position="24"/>
        <end position="26"/>
    </location>
</feature>
<feature type="binding site" description="covalent" evidence="1">
    <location>
        <position position="19"/>
    </location>
    <ligand>
        <name>15,16-dihydrobiliverdin</name>
        <dbReference type="ChEBI" id="CHEBI:57899"/>
    </ligand>
</feature>
<feature type="binding site" evidence="1">
    <location>
        <position position="21"/>
    </location>
    <ligand>
        <name>15,16-dihydrobiliverdin</name>
        <dbReference type="ChEBI" id="CHEBI:57899"/>
    </ligand>
</feature>
<feature type="binding site" evidence="1">
    <location>
        <position position="40"/>
    </location>
    <ligand>
        <name>15,16-dihydrobiliverdin</name>
        <dbReference type="ChEBI" id="CHEBI:57899"/>
    </ligand>
</feature>
<feature type="modified residue" description="5-hydroxylysine" evidence="1">
    <location>
        <position position="4"/>
    </location>
</feature>
<feature type="non-terminal residue">
    <location>
        <position position="44"/>
    </location>
</feature>